<dbReference type="EC" id="2.4.99.17" evidence="1"/>
<dbReference type="EMBL" id="CP000381">
    <property type="protein sequence ID" value="ABX72570.1"/>
    <property type="molecule type" value="Genomic_DNA"/>
</dbReference>
<dbReference type="RefSeq" id="WP_012221278.1">
    <property type="nucleotide sequence ID" value="NC_010120.1"/>
</dbReference>
<dbReference type="SMR" id="A9M1H2"/>
<dbReference type="KEGG" id="nmn:NMCC_0363"/>
<dbReference type="HOGENOM" id="CLU_039110_1_0_4"/>
<dbReference type="UniPathway" id="UPA00392"/>
<dbReference type="Proteomes" id="UP000001177">
    <property type="component" value="Chromosome"/>
</dbReference>
<dbReference type="GO" id="GO:0005737">
    <property type="term" value="C:cytoplasm"/>
    <property type="evidence" value="ECO:0007669"/>
    <property type="project" value="UniProtKB-SubCell"/>
</dbReference>
<dbReference type="GO" id="GO:0051075">
    <property type="term" value="F:S-adenosylmethionine:tRNA ribosyltransferase-isomerase activity"/>
    <property type="evidence" value="ECO:0007669"/>
    <property type="project" value="UniProtKB-EC"/>
</dbReference>
<dbReference type="GO" id="GO:0008616">
    <property type="term" value="P:queuosine biosynthetic process"/>
    <property type="evidence" value="ECO:0007669"/>
    <property type="project" value="UniProtKB-UniRule"/>
</dbReference>
<dbReference type="GO" id="GO:0002099">
    <property type="term" value="P:tRNA wobble guanine modification"/>
    <property type="evidence" value="ECO:0007669"/>
    <property type="project" value="TreeGrafter"/>
</dbReference>
<dbReference type="FunFam" id="3.40.1780.10:FF:000001">
    <property type="entry name" value="S-adenosylmethionine:tRNA ribosyltransferase-isomerase"/>
    <property type="match status" value="1"/>
</dbReference>
<dbReference type="Gene3D" id="2.40.10.240">
    <property type="entry name" value="QueA-like"/>
    <property type="match status" value="1"/>
</dbReference>
<dbReference type="Gene3D" id="3.40.1780.10">
    <property type="entry name" value="QueA-like"/>
    <property type="match status" value="1"/>
</dbReference>
<dbReference type="HAMAP" id="MF_00113">
    <property type="entry name" value="QueA"/>
    <property type="match status" value="1"/>
</dbReference>
<dbReference type="InterPro" id="IPR003699">
    <property type="entry name" value="QueA"/>
</dbReference>
<dbReference type="InterPro" id="IPR042118">
    <property type="entry name" value="QueA_dom1"/>
</dbReference>
<dbReference type="InterPro" id="IPR042119">
    <property type="entry name" value="QueA_dom2"/>
</dbReference>
<dbReference type="InterPro" id="IPR036100">
    <property type="entry name" value="QueA_sf"/>
</dbReference>
<dbReference type="NCBIfam" id="NF001140">
    <property type="entry name" value="PRK00147.1"/>
    <property type="match status" value="1"/>
</dbReference>
<dbReference type="NCBIfam" id="TIGR00113">
    <property type="entry name" value="queA"/>
    <property type="match status" value="1"/>
</dbReference>
<dbReference type="PANTHER" id="PTHR30307">
    <property type="entry name" value="S-ADENOSYLMETHIONINE:TRNA RIBOSYLTRANSFERASE-ISOMERASE"/>
    <property type="match status" value="1"/>
</dbReference>
<dbReference type="PANTHER" id="PTHR30307:SF0">
    <property type="entry name" value="S-ADENOSYLMETHIONINE:TRNA RIBOSYLTRANSFERASE-ISOMERASE"/>
    <property type="match status" value="1"/>
</dbReference>
<dbReference type="Pfam" id="PF02547">
    <property type="entry name" value="Queuosine_synth"/>
    <property type="match status" value="1"/>
</dbReference>
<dbReference type="SUPFAM" id="SSF111337">
    <property type="entry name" value="QueA-like"/>
    <property type="match status" value="1"/>
</dbReference>
<name>QUEA_NEIM0</name>
<proteinExistence type="inferred from homology"/>
<organism>
    <name type="scientific">Neisseria meningitidis serogroup C (strain 053442)</name>
    <dbReference type="NCBI Taxonomy" id="374833"/>
    <lineage>
        <taxon>Bacteria</taxon>
        <taxon>Pseudomonadati</taxon>
        <taxon>Pseudomonadota</taxon>
        <taxon>Betaproteobacteria</taxon>
        <taxon>Neisseriales</taxon>
        <taxon>Neisseriaceae</taxon>
        <taxon>Neisseria</taxon>
    </lineage>
</organism>
<protein>
    <recommendedName>
        <fullName evidence="1">S-adenosylmethionine:tRNA ribosyltransferase-isomerase</fullName>
        <ecNumber evidence="1">2.4.99.17</ecNumber>
    </recommendedName>
    <alternativeName>
        <fullName evidence="1">Queuosine biosynthesis protein QueA</fullName>
    </alternativeName>
</protein>
<feature type="chain" id="PRO_1000076010" description="S-adenosylmethionine:tRNA ribosyltransferase-isomerase">
    <location>
        <begin position="1"/>
        <end position="346"/>
    </location>
</feature>
<sequence length="346" mass="38191">MDISDFDFTLPEKLIAQHPPEVRGSSRLLVALPDMPLQDRVFGDLPDYVEAGDVLVFNNTKVMKARLFGQKDSGGRIEALIERVLDSHTALAHIRSSKSPKPGMGLVFEGGIRAVMVGREGELFCLRFEGGETVYELLEQNGHLPLPPYIERAADADDDSRYQTVYAKYQGAVAAPTAGLHFTEELLRRLKDKGAVTAEVTLHVGAGTFQPVRVDKIEEHKMHSEWFEVPSETAAAVEAAKARGNKVWAVGTTSMRALESAARATGRLKAGQGDTDIFITPGYRFNVVDRLVTNFHLPKSTLLMLVSAFSGMGHIRAAYRHAVEREYRFFSYGDAMVLGRNEGVVR</sequence>
<accession>A9M1H2</accession>
<evidence type="ECO:0000255" key="1">
    <source>
        <dbReference type="HAMAP-Rule" id="MF_00113"/>
    </source>
</evidence>
<comment type="function">
    <text evidence="1">Transfers and isomerizes the ribose moiety from AdoMet to the 7-aminomethyl group of 7-deazaguanine (preQ1-tRNA) to give epoxyqueuosine (oQ-tRNA).</text>
</comment>
<comment type="catalytic activity">
    <reaction evidence="1">
        <text>7-aminomethyl-7-carbaguanosine(34) in tRNA + S-adenosyl-L-methionine = epoxyqueuosine(34) in tRNA + adenine + L-methionine + 2 H(+)</text>
        <dbReference type="Rhea" id="RHEA:32155"/>
        <dbReference type="Rhea" id="RHEA-COMP:10342"/>
        <dbReference type="Rhea" id="RHEA-COMP:18582"/>
        <dbReference type="ChEBI" id="CHEBI:15378"/>
        <dbReference type="ChEBI" id="CHEBI:16708"/>
        <dbReference type="ChEBI" id="CHEBI:57844"/>
        <dbReference type="ChEBI" id="CHEBI:59789"/>
        <dbReference type="ChEBI" id="CHEBI:82833"/>
        <dbReference type="ChEBI" id="CHEBI:194443"/>
        <dbReference type="EC" id="2.4.99.17"/>
    </reaction>
</comment>
<comment type="pathway">
    <text evidence="1">tRNA modification; tRNA-queuosine biosynthesis.</text>
</comment>
<comment type="subunit">
    <text evidence="1">Monomer.</text>
</comment>
<comment type="subcellular location">
    <subcellularLocation>
        <location evidence="1">Cytoplasm</location>
    </subcellularLocation>
</comment>
<comment type="similarity">
    <text evidence="1">Belongs to the QueA family.</text>
</comment>
<reference key="1">
    <citation type="journal article" date="2008" name="Genomics">
        <title>Characterization of ST-4821 complex, a unique Neisseria meningitidis clone.</title>
        <authorList>
            <person name="Peng J."/>
            <person name="Yang L."/>
            <person name="Yang F."/>
            <person name="Yang J."/>
            <person name="Yan Y."/>
            <person name="Nie H."/>
            <person name="Zhang X."/>
            <person name="Xiong Z."/>
            <person name="Jiang Y."/>
            <person name="Cheng F."/>
            <person name="Xu X."/>
            <person name="Chen S."/>
            <person name="Sun L."/>
            <person name="Li W."/>
            <person name="Shen Y."/>
            <person name="Shao Z."/>
            <person name="Liang X."/>
            <person name="Xu J."/>
            <person name="Jin Q."/>
        </authorList>
    </citation>
    <scope>NUCLEOTIDE SEQUENCE [LARGE SCALE GENOMIC DNA]</scope>
    <source>
        <strain>053442</strain>
    </source>
</reference>
<keyword id="KW-0963">Cytoplasm</keyword>
<keyword id="KW-0671">Queuosine biosynthesis</keyword>
<keyword id="KW-0949">S-adenosyl-L-methionine</keyword>
<keyword id="KW-0808">Transferase</keyword>
<gene>
    <name evidence="1" type="primary">queA</name>
    <name type="ordered locus">NMCC_0363</name>
</gene>